<feature type="chain" id="PRO_1000123343" description="Large ribosomal subunit protein bL19">
    <location>
        <begin position="1"/>
        <end position="113"/>
    </location>
</feature>
<dbReference type="EMBL" id="CU458896">
    <property type="protein sequence ID" value="CAM63300.1"/>
    <property type="molecule type" value="Genomic_DNA"/>
</dbReference>
<dbReference type="RefSeq" id="WP_005056983.1">
    <property type="nucleotide sequence ID" value="NZ_MLCG01000001.1"/>
</dbReference>
<dbReference type="SMR" id="B1MDI1"/>
<dbReference type="GeneID" id="93380155"/>
<dbReference type="KEGG" id="mab:MAB_3224c"/>
<dbReference type="Proteomes" id="UP000007137">
    <property type="component" value="Chromosome"/>
</dbReference>
<dbReference type="GO" id="GO:0022625">
    <property type="term" value="C:cytosolic large ribosomal subunit"/>
    <property type="evidence" value="ECO:0007669"/>
    <property type="project" value="TreeGrafter"/>
</dbReference>
<dbReference type="GO" id="GO:0003735">
    <property type="term" value="F:structural constituent of ribosome"/>
    <property type="evidence" value="ECO:0007669"/>
    <property type="project" value="InterPro"/>
</dbReference>
<dbReference type="GO" id="GO:0006412">
    <property type="term" value="P:translation"/>
    <property type="evidence" value="ECO:0007669"/>
    <property type="project" value="UniProtKB-UniRule"/>
</dbReference>
<dbReference type="FunFam" id="2.30.30.790:FF:000001">
    <property type="entry name" value="50S ribosomal protein L19"/>
    <property type="match status" value="1"/>
</dbReference>
<dbReference type="Gene3D" id="2.30.30.790">
    <property type="match status" value="1"/>
</dbReference>
<dbReference type="HAMAP" id="MF_00402">
    <property type="entry name" value="Ribosomal_bL19"/>
    <property type="match status" value="1"/>
</dbReference>
<dbReference type="InterPro" id="IPR001857">
    <property type="entry name" value="Ribosomal_bL19"/>
</dbReference>
<dbReference type="InterPro" id="IPR018257">
    <property type="entry name" value="Ribosomal_bL19_CS"/>
</dbReference>
<dbReference type="InterPro" id="IPR038657">
    <property type="entry name" value="Ribosomal_bL19_sf"/>
</dbReference>
<dbReference type="InterPro" id="IPR008991">
    <property type="entry name" value="Translation_prot_SH3-like_sf"/>
</dbReference>
<dbReference type="NCBIfam" id="TIGR01024">
    <property type="entry name" value="rplS_bact"/>
    <property type="match status" value="1"/>
</dbReference>
<dbReference type="PANTHER" id="PTHR15680:SF9">
    <property type="entry name" value="LARGE RIBOSOMAL SUBUNIT PROTEIN BL19M"/>
    <property type="match status" value="1"/>
</dbReference>
<dbReference type="PANTHER" id="PTHR15680">
    <property type="entry name" value="RIBOSOMAL PROTEIN L19"/>
    <property type="match status" value="1"/>
</dbReference>
<dbReference type="Pfam" id="PF01245">
    <property type="entry name" value="Ribosomal_L19"/>
    <property type="match status" value="1"/>
</dbReference>
<dbReference type="PIRSF" id="PIRSF002191">
    <property type="entry name" value="Ribosomal_L19"/>
    <property type="match status" value="1"/>
</dbReference>
<dbReference type="PRINTS" id="PR00061">
    <property type="entry name" value="RIBOSOMALL19"/>
</dbReference>
<dbReference type="SUPFAM" id="SSF50104">
    <property type="entry name" value="Translation proteins SH3-like domain"/>
    <property type="match status" value="1"/>
</dbReference>
<dbReference type="PROSITE" id="PS01015">
    <property type="entry name" value="RIBOSOMAL_L19"/>
    <property type="match status" value="1"/>
</dbReference>
<protein>
    <recommendedName>
        <fullName evidence="1">Large ribosomal subunit protein bL19</fullName>
    </recommendedName>
    <alternativeName>
        <fullName evidence="2">50S ribosomal protein L19</fullName>
    </alternativeName>
</protein>
<sequence>MNTLDFVDQASLREDVPDFRPGDTINVHVKVIEGSKERIQVFKGVVLRRSGGGVSATFTVRKESYGVGVERTFPVHSPNIDHIEILTRGAVRRAKLYYLRELRGKKAKIKEKR</sequence>
<comment type="function">
    <text evidence="1">This protein is located at the 30S-50S ribosomal subunit interface and may play a role in the structure and function of the aminoacyl-tRNA binding site.</text>
</comment>
<comment type="similarity">
    <text evidence="1">Belongs to the bacterial ribosomal protein bL19 family.</text>
</comment>
<organism>
    <name type="scientific">Mycobacteroides abscessus (strain ATCC 19977 / DSM 44196 / CCUG 20993 / CIP 104536 / JCM 13569 / NCTC 13031 / TMC 1543 / L948)</name>
    <name type="common">Mycobacterium abscessus</name>
    <dbReference type="NCBI Taxonomy" id="561007"/>
    <lineage>
        <taxon>Bacteria</taxon>
        <taxon>Bacillati</taxon>
        <taxon>Actinomycetota</taxon>
        <taxon>Actinomycetes</taxon>
        <taxon>Mycobacteriales</taxon>
        <taxon>Mycobacteriaceae</taxon>
        <taxon>Mycobacteroides</taxon>
        <taxon>Mycobacteroides abscessus</taxon>
    </lineage>
</organism>
<accession>B1MDI1</accession>
<evidence type="ECO:0000255" key="1">
    <source>
        <dbReference type="HAMAP-Rule" id="MF_00402"/>
    </source>
</evidence>
<evidence type="ECO:0000305" key="2"/>
<gene>
    <name evidence="1" type="primary">rplS</name>
    <name type="ordered locus">MAB_3224c</name>
</gene>
<proteinExistence type="inferred from homology"/>
<name>RL19_MYCA9</name>
<keyword id="KW-1185">Reference proteome</keyword>
<keyword id="KW-0687">Ribonucleoprotein</keyword>
<keyword id="KW-0689">Ribosomal protein</keyword>
<reference key="1">
    <citation type="journal article" date="2009" name="PLoS ONE">
        <title>Non mycobacterial virulence genes in the genome of the emerging pathogen Mycobacterium abscessus.</title>
        <authorList>
            <person name="Ripoll F."/>
            <person name="Pasek S."/>
            <person name="Schenowitz C."/>
            <person name="Dossat C."/>
            <person name="Barbe V."/>
            <person name="Rottman M."/>
            <person name="Macheras E."/>
            <person name="Heym B."/>
            <person name="Herrmann J.L."/>
            <person name="Daffe M."/>
            <person name="Brosch R."/>
            <person name="Risler J.L."/>
            <person name="Gaillard J.L."/>
        </authorList>
    </citation>
    <scope>NUCLEOTIDE SEQUENCE [LARGE SCALE GENOMIC DNA]</scope>
    <source>
        <strain>ATCC 19977 / DSM 44196 / CCUG 20993 / CIP 104536 / JCM 13569 / NCTC 13031 / TMC 1543 / L948</strain>
    </source>
</reference>